<name>CBID_METM6</name>
<gene>
    <name evidence="1" type="primary">cbiD</name>
    <name type="ordered locus">MmarC6_1470</name>
</gene>
<feature type="chain" id="PRO_1000133739" description="Cobalt-precorrin-5B C(1)-methyltransferase">
    <location>
        <begin position="1"/>
        <end position="365"/>
    </location>
</feature>
<dbReference type="EC" id="2.1.1.195" evidence="1"/>
<dbReference type="EMBL" id="CP000867">
    <property type="protein sequence ID" value="ABX02283.1"/>
    <property type="molecule type" value="Genomic_DNA"/>
</dbReference>
<dbReference type="SMR" id="A9AAB0"/>
<dbReference type="STRING" id="444158.MmarC6_1470"/>
<dbReference type="KEGG" id="mmx:MmarC6_1470"/>
<dbReference type="eggNOG" id="arCOG04383">
    <property type="taxonomic scope" value="Archaea"/>
</dbReference>
<dbReference type="HOGENOM" id="CLU_041273_1_0_2"/>
<dbReference type="OrthoDB" id="10423at2157"/>
<dbReference type="PhylomeDB" id="A9AAB0"/>
<dbReference type="UniPathway" id="UPA00148">
    <property type="reaction ID" value="UER00227"/>
</dbReference>
<dbReference type="GO" id="GO:0043780">
    <property type="term" value="F:cobalt-precorrin-5B C1-methyltransferase activity"/>
    <property type="evidence" value="ECO:0007669"/>
    <property type="project" value="RHEA"/>
</dbReference>
<dbReference type="GO" id="GO:0019251">
    <property type="term" value="P:anaerobic cobalamin biosynthetic process"/>
    <property type="evidence" value="ECO:0007669"/>
    <property type="project" value="UniProtKB-UniRule"/>
</dbReference>
<dbReference type="GO" id="GO:0032259">
    <property type="term" value="P:methylation"/>
    <property type="evidence" value="ECO:0007669"/>
    <property type="project" value="UniProtKB-KW"/>
</dbReference>
<dbReference type="Gene3D" id="3.30.2110.10">
    <property type="entry name" value="CbiD-like"/>
    <property type="match status" value="1"/>
</dbReference>
<dbReference type="HAMAP" id="MF_00787">
    <property type="entry name" value="CbiD"/>
    <property type="match status" value="1"/>
</dbReference>
<dbReference type="InterPro" id="IPR002748">
    <property type="entry name" value="CbiD"/>
</dbReference>
<dbReference type="InterPro" id="IPR036074">
    <property type="entry name" value="CbiD_sf"/>
</dbReference>
<dbReference type="NCBIfam" id="TIGR00312">
    <property type="entry name" value="cbiD"/>
    <property type="match status" value="1"/>
</dbReference>
<dbReference type="PANTHER" id="PTHR35863">
    <property type="entry name" value="COBALT-PRECORRIN-5B C(1)-METHYLTRANSFERASE"/>
    <property type="match status" value="1"/>
</dbReference>
<dbReference type="PANTHER" id="PTHR35863:SF1">
    <property type="entry name" value="COBALT-PRECORRIN-5B C(1)-METHYLTRANSFERASE"/>
    <property type="match status" value="1"/>
</dbReference>
<dbReference type="Pfam" id="PF01888">
    <property type="entry name" value="CbiD"/>
    <property type="match status" value="1"/>
</dbReference>
<dbReference type="PIRSF" id="PIRSF026782">
    <property type="entry name" value="CbiD"/>
    <property type="match status" value="1"/>
</dbReference>
<dbReference type="SUPFAM" id="SSF111342">
    <property type="entry name" value="CbiD-like"/>
    <property type="match status" value="1"/>
</dbReference>
<organism>
    <name type="scientific">Methanococcus maripaludis (strain C6 / ATCC BAA-1332)</name>
    <dbReference type="NCBI Taxonomy" id="444158"/>
    <lineage>
        <taxon>Archaea</taxon>
        <taxon>Methanobacteriati</taxon>
        <taxon>Methanobacteriota</taxon>
        <taxon>Methanomada group</taxon>
        <taxon>Methanococci</taxon>
        <taxon>Methanococcales</taxon>
        <taxon>Methanococcaceae</taxon>
        <taxon>Methanococcus</taxon>
    </lineage>
</organism>
<keyword id="KW-0169">Cobalamin biosynthesis</keyword>
<keyword id="KW-0489">Methyltransferase</keyword>
<keyword id="KW-0949">S-adenosyl-L-methionine</keyword>
<keyword id="KW-0808">Transferase</keyword>
<protein>
    <recommendedName>
        <fullName evidence="1">Cobalt-precorrin-5B C(1)-methyltransferase</fullName>
        <ecNumber evidence="1">2.1.1.195</ecNumber>
    </recommendedName>
    <alternativeName>
        <fullName evidence="1">Cobalt-precorrin-6A synthase</fullName>
    </alternativeName>
</protein>
<accession>A9AAB0</accession>
<proteinExistence type="inferred from homology"/>
<sequence>MSKIDFRLEKTFGYTTGACAAAGAYSALYFLKNNEKLNFVEILNLKGDSLIIPIKNIEKRGNTAVSTVEKFAGEDIDITNGMDIKIEVILENWDDGYPKPSNVIIIGGTGVGLITKSGLQIKPGDHAINPKPREMIETNLKSLLKDDEYVTVKISVPTGDEIAKKTLNPKLGIVGGISILGTTGIVRPMSNEAYKESLAPQIDVALANNFENLIFVPGNIGTKHAKILLNAEEDQIIEVSNFWDYMLDKAKEKGVKDIMVFGHAGKIVKLAGGIFDTHSRVADARNEILCAYASLVSQDVEMLQKILQSNTTEDIVEILTEKGILSEVFNKVSKRVVERLSLRWEGINFSCIVIDMKGNILGKSD</sequence>
<comment type="function">
    <text evidence="1">Catalyzes the methylation of C-1 in cobalt-precorrin-5B to form cobalt-precorrin-6A.</text>
</comment>
<comment type="catalytic activity">
    <reaction evidence="1">
        <text>Co-precorrin-5B + S-adenosyl-L-methionine = Co-precorrin-6A + S-adenosyl-L-homocysteine</text>
        <dbReference type="Rhea" id="RHEA:26285"/>
        <dbReference type="ChEBI" id="CHEBI:57856"/>
        <dbReference type="ChEBI" id="CHEBI:59789"/>
        <dbReference type="ChEBI" id="CHEBI:60063"/>
        <dbReference type="ChEBI" id="CHEBI:60064"/>
        <dbReference type="EC" id="2.1.1.195"/>
    </reaction>
</comment>
<comment type="pathway">
    <text evidence="1">Cofactor biosynthesis; adenosylcobalamin biosynthesis; cob(II)yrinate a,c-diamide from sirohydrochlorin (anaerobic route): step 6/10.</text>
</comment>
<comment type="similarity">
    <text evidence="1">Belongs to the CbiD family.</text>
</comment>
<reference key="1">
    <citation type="submission" date="2007-10" db="EMBL/GenBank/DDBJ databases">
        <title>Complete sequence of Methanococcus maripaludis C6.</title>
        <authorList>
            <consortium name="US DOE Joint Genome Institute"/>
            <person name="Copeland A."/>
            <person name="Lucas S."/>
            <person name="Lapidus A."/>
            <person name="Barry K."/>
            <person name="Glavina del Rio T."/>
            <person name="Dalin E."/>
            <person name="Tice H."/>
            <person name="Pitluck S."/>
            <person name="Clum A."/>
            <person name="Schmutz J."/>
            <person name="Larimer F."/>
            <person name="Land M."/>
            <person name="Hauser L."/>
            <person name="Kyrpides N."/>
            <person name="Mikhailova N."/>
            <person name="Sieprawska-Lupa M."/>
            <person name="Whitman W.B."/>
            <person name="Richardson P."/>
        </authorList>
    </citation>
    <scope>NUCLEOTIDE SEQUENCE [LARGE SCALE GENOMIC DNA]</scope>
    <source>
        <strain>C6 / ATCC BAA-1332</strain>
    </source>
</reference>
<evidence type="ECO:0000255" key="1">
    <source>
        <dbReference type="HAMAP-Rule" id="MF_00787"/>
    </source>
</evidence>